<organism>
    <name type="scientific">Mycosarcoma maydis</name>
    <name type="common">Corn smut fungus</name>
    <name type="synonym">Ustilago maydis</name>
    <dbReference type="NCBI Taxonomy" id="5270"/>
    <lineage>
        <taxon>Eukaryota</taxon>
        <taxon>Fungi</taxon>
        <taxon>Dikarya</taxon>
        <taxon>Basidiomycota</taxon>
        <taxon>Ustilaginomycotina</taxon>
        <taxon>Ustilaginomycetes</taxon>
        <taxon>Ustilaginales</taxon>
        <taxon>Ustilaginaceae</taxon>
        <taxon>Mycosarcoma</taxon>
    </lineage>
</organism>
<gene>
    <name type="primary">SNU13</name>
    <name type="ORF">UMAG_06360</name>
</gene>
<sequence>MSAPNPKAFPLADATLTNQILDLIQQASHYKQLKKGANEATKTLNRGICEFIVMAADVEPIEIVLHLPLLCEDKNVPYVFVPSKTALGRACGVSRPVVSASVTTNEARELQSQIQTVKLAIERLLI</sequence>
<reference key="1">
    <citation type="journal article" date="2006" name="Nature">
        <title>Insights from the genome of the biotrophic fungal plant pathogen Ustilago maydis.</title>
        <authorList>
            <person name="Kaemper J."/>
            <person name="Kahmann R."/>
            <person name="Boelker M."/>
            <person name="Ma L.-J."/>
            <person name="Brefort T."/>
            <person name="Saville B.J."/>
            <person name="Banuett F."/>
            <person name="Kronstad J.W."/>
            <person name="Gold S.E."/>
            <person name="Mueller O."/>
            <person name="Perlin M.H."/>
            <person name="Woesten H.A.B."/>
            <person name="de Vries R."/>
            <person name="Ruiz-Herrera J."/>
            <person name="Reynaga-Pena C.G."/>
            <person name="Snetselaar K."/>
            <person name="McCann M."/>
            <person name="Perez-Martin J."/>
            <person name="Feldbruegge M."/>
            <person name="Basse C.W."/>
            <person name="Steinberg G."/>
            <person name="Ibeas J.I."/>
            <person name="Holloman W."/>
            <person name="Guzman P."/>
            <person name="Farman M.L."/>
            <person name="Stajich J.E."/>
            <person name="Sentandreu R."/>
            <person name="Gonzalez-Prieto J.M."/>
            <person name="Kennell J.C."/>
            <person name="Molina L."/>
            <person name="Schirawski J."/>
            <person name="Mendoza-Mendoza A."/>
            <person name="Greilinger D."/>
            <person name="Muench K."/>
            <person name="Roessel N."/>
            <person name="Scherer M."/>
            <person name="Vranes M."/>
            <person name="Ladendorf O."/>
            <person name="Vincon V."/>
            <person name="Fuchs U."/>
            <person name="Sandrock B."/>
            <person name="Meng S."/>
            <person name="Ho E.C.H."/>
            <person name="Cahill M.J."/>
            <person name="Boyce K.J."/>
            <person name="Klose J."/>
            <person name="Klosterman S.J."/>
            <person name="Deelstra H.J."/>
            <person name="Ortiz-Castellanos L."/>
            <person name="Li W."/>
            <person name="Sanchez-Alonso P."/>
            <person name="Schreier P.H."/>
            <person name="Haeuser-Hahn I."/>
            <person name="Vaupel M."/>
            <person name="Koopmann E."/>
            <person name="Friedrich G."/>
            <person name="Voss H."/>
            <person name="Schlueter T."/>
            <person name="Margolis J."/>
            <person name="Platt D."/>
            <person name="Swimmer C."/>
            <person name="Gnirke A."/>
            <person name="Chen F."/>
            <person name="Vysotskaia V."/>
            <person name="Mannhaupt G."/>
            <person name="Gueldener U."/>
            <person name="Muensterkoetter M."/>
            <person name="Haase D."/>
            <person name="Oesterheld M."/>
            <person name="Mewes H.-W."/>
            <person name="Mauceli E.W."/>
            <person name="DeCaprio D."/>
            <person name="Wade C.M."/>
            <person name="Butler J."/>
            <person name="Young S.K."/>
            <person name="Jaffe D.B."/>
            <person name="Calvo S.E."/>
            <person name="Nusbaum C."/>
            <person name="Galagan J.E."/>
            <person name="Birren B.W."/>
        </authorList>
    </citation>
    <scope>NUCLEOTIDE SEQUENCE [LARGE SCALE GENOMIC DNA]</scope>
    <source>
        <strain>DSM 14603 / FGSC 9021 / UM521</strain>
    </source>
</reference>
<reference key="2">
    <citation type="submission" date="2014-09" db="EMBL/GenBank/DDBJ databases">
        <authorList>
            <person name="Gueldener U."/>
            <person name="Muensterkoetter M."/>
            <person name="Walter M.C."/>
            <person name="Mannhaupt G."/>
            <person name="Kahmann R."/>
        </authorList>
    </citation>
    <scope>GENOME REANNOTATION</scope>
    <source>
        <strain>DSM 14603 / FGSC 9021 / UM521</strain>
    </source>
</reference>
<protein>
    <recommendedName>
        <fullName>13 kDa ribonucleoprotein-associated protein</fullName>
    </recommendedName>
</protein>
<comment type="function">
    <text evidence="1">Common component of the spliceosome and rRNA processing machinery. In association with the spliceosomal U4/U6.U5 tri-snRNP particle, required for splicing of pre-mRNA. In association with box C/D snoRNPs, required for processing of pre-ribosomal RNA (rRNA) and site-specific 2'-O-methylation of substrate RNAs. Essential for the accumulation and stability of U4 snRNA, U6 snRNA, and box C/D snoRNAs (By similarity).</text>
</comment>
<comment type="subunit">
    <text evidence="1">Component of the U3 snoRNP particle. Binds to the C'/D and B/C motifs in U3 snoRNA. Component of the 25S U4/U6.U5 tri-snRNP particle, a subcomplex of the spliceosome. Binds to the 5' stem-loop of U4 snRNA (By similarity).</text>
</comment>
<comment type="subcellular location">
    <subcellularLocation>
        <location evidence="1">Nucleus</location>
        <location evidence="1">Nucleolus</location>
    </subcellularLocation>
</comment>
<comment type="similarity">
    <text evidence="2">Belongs to the eukaryotic ribosomal protein eL8 family.</text>
</comment>
<keyword id="KW-0507">mRNA processing</keyword>
<keyword id="KW-0508">mRNA splicing</keyword>
<keyword id="KW-0539">Nucleus</keyword>
<keyword id="KW-1185">Reference proteome</keyword>
<keyword id="KW-0687">Ribonucleoprotein</keyword>
<keyword id="KW-0690">Ribosome biogenesis</keyword>
<keyword id="KW-0694">RNA-binding</keyword>
<keyword id="KW-0698">rRNA processing</keyword>
<keyword id="KW-0747">Spliceosome</keyword>
<feature type="chain" id="PRO_0000290663" description="13 kDa ribonucleoprotein-associated protein">
    <location>
        <begin position="1"/>
        <end position="126"/>
    </location>
</feature>
<name>SNU13_MYCMD</name>
<dbReference type="EMBL" id="CM003162">
    <property type="protein sequence ID" value="KIS65657.1"/>
    <property type="molecule type" value="Genomic_DNA"/>
</dbReference>
<dbReference type="RefSeq" id="XP_011392655.1">
    <property type="nucleotide sequence ID" value="XM_011394353.1"/>
</dbReference>
<dbReference type="SMR" id="Q4P0K3"/>
<dbReference type="FunCoup" id="Q4P0K3">
    <property type="interactions" value="589"/>
</dbReference>
<dbReference type="STRING" id="237631.Q4P0K3"/>
<dbReference type="EnsemblFungi" id="KIS65657">
    <property type="protein sequence ID" value="KIS65657"/>
    <property type="gene ID" value="UMAG_06360"/>
</dbReference>
<dbReference type="GeneID" id="23565970"/>
<dbReference type="KEGG" id="uma:UMAG_06360"/>
<dbReference type="VEuPathDB" id="FungiDB:UMAG_06360"/>
<dbReference type="eggNOG" id="KOG3387">
    <property type="taxonomic scope" value="Eukaryota"/>
</dbReference>
<dbReference type="HOGENOM" id="CLU_084513_4_1_1"/>
<dbReference type="InParanoid" id="Q4P0K3"/>
<dbReference type="OMA" id="IKNQIYA"/>
<dbReference type="OrthoDB" id="1924699at2759"/>
<dbReference type="Proteomes" id="UP000000561">
    <property type="component" value="Chromosome 23"/>
</dbReference>
<dbReference type="GO" id="GO:0031428">
    <property type="term" value="C:box C/D methylation guide snoRNP complex"/>
    <property type="evidence" value="ECO:0000318"/>
    <property type="project" value="GO_Central"/>
</dbReference>
<dbReference type="GO" id="GO:0005730">
    <property type="term" value="C:nucleolus"/>
    <property type="evidence" value="ECO:0000318"/>
    <property type="project" value="GO_Central"/>
</dbReference>
<dbReference type="GO" id="GO:0071011">
    <property type="term" value="C:precatalytic spliceosome"/>
    <property type="evidence" value="ECO:0000318"/>
    <property type="project" value="GO_Central"/>
</dbReference>
<dbReference type="GO" id="GO:0032040">
    <property type="term" value="C:small-subunit processome"/>
    <property type="evidence" value="ECO:0000318"/>
    <property type="project" value="GO_Central"/>
</dbReference>
<dbReference type="GO" id="GO:0046540">
    <property type="term" value="C:U4/U6 x U5 tri-snRNP complex"/>
    <property type="evidence" value="ECO:0000318"/>
    <property type="project" value="GO_Central"/>
</dbReference>
<dbReference type="GO" id="GO:0003723">
    <property type="term" value="F:RNA binding"/>
    <property type="evidence" value="ECO:0000318"/>
    <property type="project" value="GO_Central"/>
</dbReference>
<dbReference type="GO" id="GO:0030490">
    <property type="term" value="P:maturation of SSU-rRNA"/>
    <property type="evidence" value="ECO:0000318"/>
    <property type="project" value="GO_Central"/>
</dbReference>
<dbReference type="GO" id="GO:0000398">
    <property type="term" value="P:mRNA splicing, via spliceosome"/>
    <property type="evidence" value="ECO:0000318"/>
    <property type="project" value="GO_Central"/>
</dbReference>
<dbReference type="CDD" id="cd21104">
    <property type="entry name" value="SNU13"/>
    <property type="match status" value="1"/>
</dbReference>
<dbReference type="FunFam" id="3.30.1330.30:FF:000002">
    <property type="entry name" value="NHP2-like protein 1 homolog"/>
    <property type="match status" value="1"/>
</dbReference>
<dbReference type="Gene3D" id="3.30.1330.30">
    <property type="match status" value="1"/>
</dbReference>
<dbReference type="InterPro" id="IPR050257">
    <property type="entry name" value="eL8/uL1-like"/>
</dbReference>
<dbReference type="InterPro" id="IPR002415">
    <property type="entry name" value="H/ACA_rnp_Nhp2-like"/>
</dbReference>
<dbReference type="InterPro" id="IPR029064">
    <property type="entry name" value="Ribosomal_eL30-like_sf"/>
</dbReference>
<dbReference type="InterPro" id="IPR004037">
    <property type="entry name" value="Ribosomal_eL8-like_CS"/>
</dbReference>
<dbReference type="InterPro" id="IPR004038">
    <property type="entry name" value="Ribosomal_eL8/eL30/eS12/Gad45"/>
</dbReference>
<dbReference type="InterPro" id="IPR018492">
    <property type="entry name" value="Ribosomal_eL8/Nhp2"/>
</dbReference>
<dbReference type="PANTHER" id="PTHR23105">
    <property type="entry name" value="RIBOSOMAL PROTEIN L7AE FAMILY MEMBER"/>
    <property type="match status" value="1"/>
</dbReference>
<dbReference type="Pfam" id="PF01248">
    <property type="entry name" value="Ribosomal_L7Ae"/>
    <property type="match status" value="1"/>
</dbReference>
<dbReference type="PRINTS" id="PR00881">
    <property type="entry name" value="L7ARS6FAMILY"/>
</dbReference>
<dbReference type="PRINTS" id="PR00883">
    <property type="entry name" value="NUCLEARHMG"/>
</dbReference>
<dbReference type="SUPFAM" id="SSF55315">
    <property type="entry name" value="L30e-like"/>
    <property type="match status" value="1"/>
</dbReference>
<dbReference type="PROSITE" id="PS01082">
    <property type="entry name" value="RIBOSOMAL_L7AE"/>
    <property type="match status" value="1"/>
</dbReference>
<accession>Q4P0K3</accession>
<accession>A0A0D1BUA0</accession>
<evidence type="ECO:0000250" key="1"/>
<evidence type="ECO:0000305" key="2"/>
<proteinExistence type="inferred from homology"/>